<organism>
    <name type="scientific">Cupriavidus necator (strain ATCC 17699 / DSM 428 / KCTC 22496 / NCIMB 10442 / H16 / Stanier 337)</name>
    <name type="common">Ralstonia eutropha</name>
    <dbReference type="NCBI Taxonomy" id="381666"/>
    <lineage>
        <taxon>Bacteria</taxon>
        <taxon>Pseudomonadati</taxon>
        <taxon>Pseudomonadota</taxon>
        <taxon>Betaproteobacteria</taxon>
        <taxon>Burkholderiales</taxon>
        <taxon>Burkholderiaceae</taxon>
        <taxon>Cupriavidus</taxon>
    </lineage>
</organism>
<reference key="1">
    <citation type="journal article" date="2006" name="Nat. Biotechnol.">
        <title>Genome sequence of the bioplastic-producing 'Knallgas' bacterium Ralstonia eutropha H16.</title>
        <authorList>
            <person name="Pohlmann A."/>
            <person name="Fricke W.F."/>
            <person name="Reinecke F."/>
            <person name="Kusian B."/>
            <person name="Liesegang H."/>
            <person name="Cramm R."/>
            <person name="Eitinger T."/>
            <person name="Ewering C."/>
            <person name="Poetter M."/>
            <person name="Schwartz E."/>
            <person name="Strittmatter A."/>
            <person name="Voss I."/>
            <person name="Gottschalk G."/>
            <person name="Steinbuechel A."/>
            <person name="Friedrich B."/>
            <person name="Bowien B."/>
        </authorList>
    </citation>
    <scope>NUCLEOTIDE SEQUENCE [LARGE SCALE GENOMIC DNA]</scope>
    <source>
        <strain>ATCC 17699 / DSM 428 / KCTC 22496 / NCIMB 10442 / H16 / Stanier 337</strain>
    </source>
</reference>
<proteinExistence type="inferred from homology"/>
<name>SECB_CUPNH</name>
<sequence length="172" mass="18859">MSDQQNTQQDDQPFFNIQRVYLKDMSLEQPNSPGIFLESEAPSVEVQVNVGASQLQEGIFEVVVTGTVTTKVQDKVAFLVEAHQAGIFDIRNVPVEQLDPLLGIACPTILYPYLRGNIADVITRAGFQAIHLSEINFQALYEQRLQAAMEEAQGAEGGNSGIVMPDGSQARH</sequence>
<feature type="chain" id="PRO_1000062500" description="Protein-export protein SecB">
    <location>
        <begin position="1"/>
        <end position="172"/>
    </location>
</feature>
<feature type="region of interest" description="Disordered" evidence="2">
    <location>
        <begin position="152"/>
        <end position="172"/>
    </location>
</feature>
<protein>
    <recommendedName>
        <fullName evidence="1">Protein-export protein SecB</fullName>
    </recommendedName>
</protein>
<comment type="function">
    <text evidence="1">One of the proteins required for the normal export of preproteins out of the cell cytoplasm. It is a molecular chaperone that binds to a subset of precursor proteins, maintaining them in a translocation-competent state. It also specifically binds to its receptor SecA.</text>
</comment>
<comment type="subunit">
    <text evidence="1">Homotetramer, a dimer of dimers. One homotetramer interacts with 1 SecA dimer.</text>
</comment>
<comment type="subcellular location">
    <subcellularLocation>
        <location evidence="1">Cytoplasm</location>
    </subcellularLocation>
</comment>
<comment type="similarity">
    <text evidence="1">Belongs to the SecB family.</text>
</comment>
<gene>
    <name evidence="1" type="primary">secB</name>
    <name type="ordered locus">H16_A0335</name>
</gene>
<accession>Q0KET5</accession>
<evidence type="ECO:0000255" key="1">
    <source>
        <dbReference type="HAMAP-Rule" id="MF_00821"/>
    </source>
</evidence>
<evidence type="ECO:0000256" key="2">
    <source>
        <dbReference type="SAM" id="MobiDB-lite"/>
    </source>
</evidence>
<dbReference type="EMBL" id="AM260479">
    <property type="protein sequence ID" value="CAJ91486.1"/>
    <property type="molecule type" value="Genomic_DNA"/>
</dbReference>
<dbReference type="RefSeq" id="WP_010814828.1">
    <property type="nucleotide sequence ID" value="NZ_CP039287.1"/>
</dbReference>
<dbReference type="SMR" id="Q0KET5"/>
<dbReference type="STRING" id="381666.H16_A0335"/>
<dbReference type="GeneID" id="34308125"/>
<dbReference type="KEGG" id="reh:H16_A0335"/>
<dbReference type="eggNOG" id="COG1952">
    <property type="taxonomic scope" value="Bacteria"/>
</dbReference>
<dbReference type="HOGENOM" id="CLU_111574_1_0_4"/>
<dbReference type="OrthoDB" id="9795145at2"/>
<dbReference type="Proteomes" id="UP000008210">
    <property type="component" value="Chromosome 1"/>
</dbReference>
<dbReference type="GO" id="GO:0005737">
    <property type="term" value="C:cytoplasm"/>
    <property type="evidence" value="ECO:0007669"/>
    <property type="project" value="UniProtKB-SubCell"/>
</dbReference>
<dbReference type="GO" id="GO:0051082">
    <property type="term" value="F:unfolded protein binding"/>
    <property type="evidence" value="ECO:0007669"/>
    <property type="project" value="InterPro"/>
</dbReference>
<dbReference type="GO" id="GO:0006457">
    <property type="term" value="P:protein folding"/>
    <property type="evidence" value="ECO:0007669"/>
    <property type="project" value="UniProtKB-UniRule"/>
</dbReference>
<dbReference type="GO" id="GO:0051262">
    <property type="term" value="P:protein tetramerization"/>
    <property type="evidence" value="ECO:0007669"/>
    <property type="project" value="InterPro"/>
</dbReference>
<dbReference type="GO" id="GO:0015031">
    <property type="term" value="P:protein transport"/>
    <property type="evidence" value="ECO:0007669"/>
    <property type="project" value="UniProtKB-UniRule"/>
</dbReference>
<dbReference type="Gene3D" id="3.10.420.10">
    <property type="entry name" value="SecB-like"/>
    <property type="match status" value="1"/>
</dbReference>
<dbReference type="HAMAP" id="MF_00821">
    <property type="entry name" value="SecB"/>
    <property type="match status" value="1"/>
</dbReference>
<dbReference type="InterPro" id="IPR003708">
    <property type="entry name" value="SecB"/>
</dbReference>
<dbReference type="InterPro" id="IPR035958">
    <property type="entry name" value="SecB-like_sf"/>
</dbReference>
<dbReference type="NCBIfam" id="NF004394">
    <property type="entry name" value="PRK05751.1-5"/>
    <property type="match status" value="1"/>
</dbReference>
<dbReference type="NCBIfam" id="TIGR00809">
    <property type="entry name" value="secB"/>
    <property type="match status" value="1"/>
</dbReference>
<dbReference type="PANTHER" id="PTHR36918">
    <property type="match status" value="1"/>
</dbReference>
<dbReference type="PANTHER" id="PTHR36918:SF1">
    <property type="entry name" value="PROTEIN-EXPORT PROTEIN SECB"/>
    <property type="match status" value="1"/>
</dbReference>
<dbReference type="Pfam" id="PF02556">
    <property type="entry name" value="SecB"/>
    <property type="match status" value="1"/>
</dbReference>
<dbReference type="PRINTS" id="PR01594">
    <property type="entry name" value="SECBCHAPRONE"/>
</dbReference>
<dbReference type="SUPFAM" id="SSF54611">
    <property type="entry name" value="SecB-like"/>
    <property type="match status" value="1"/>
</dbReference>
<keyword id="KW-0143">Chaperone</keyword>
<keyword id="KW-0963">Cytoplasm</keyword>
<keyword id="KW-0653">Protein transport</keyword>
<keyword id="KW-1185">Reference proteome</keyword>
<keyword id="KW-0811">Translocation</keyword>
<keyword id="KW-0813">Transport</keyword>